<gene>
    <name evidence="1" type="primary">napA</name>
    <name type="ordered locus">Atu4408</name>
    <name type="ORF">AGR_L_917</name>
</gene>
<reference key="1">
    <citation type="journal article" date="2001" name="Science">
        <title>The genome of the natural genetic engineer Agrobacterium tumefaciens C58.</title>
        <authorList>
            <person name="Wood D.W."/>
            <person name="Setubal J.C."/>
            <person name="Kaul R."/>
            <person name="Monks D.E."/>
            <person name="Kitajima J.P."/>
            <person name="Okura V.K."/>
            <person name="Zhou Y."/>
            <person name="Chen L."/>
            <person name="Wood G.E."/>
            <person name="Almeida N.F. Jr."/>
            <person name="Woo L."/>
            <person name="Chen Y."/>
            <person name="Paulsen I.T."/>
            <person name="Eisen J.A."/>
            <person name="Karp P.D."/>
            <person name="Bovee D. Sr."/>
            <person name="Chapman P."/>
            <person name="Clendenning J."/>
            <person name="Deatherage G."/>
            <person name="Gillet W."/>
            <person name="Grant C."/>
            <person name="Kutyavin T."/>
            <person name="Levy R."/>
            <person name="Li M.-J."/>
            <person name="McClelland E."/>
            <person name="Palmieri A."/>
            <person name="Raymond C."/>
            <person name="Rouse G."/>
            <person name="Saenphimmachak C."/>
            <person name="Wu Z."/>
            <person name="Romero P."/>
            <person name="Gordon D."/>
            <person name="Zhang S."/>
            <person name="Yoo H."/>
            <person name="Tao Y."/>
            <person name="Biddle P."/>
            <person name="Jung M."/>
            <person name="Krespan W."/>
            <person name="Perry M."/>
            <person name="Gordon-Kamm B."/>
            <person name="Liao L."/>
            <person name="Kim S."/>
            <person name="Hendrick C."/>
            <person name="Zhao Z.-Y."/>
            <person name="Dolan M."/>
            <person name="Chumley F."/>
            <person name="Tingey S.V."/>
            <person name="Tomb J.-F."/>
            <person name="Gordon M.P."/>
            <person name="Olson M.V."/>
            <person name="Nester E.W."/>
        </authorList>
    </citation>
    <scope>NUCLEOTIDE SEQUENCE [LARGE SCALE GENOMIC DNA]</scope>
    <source>
        <strain>C58 / ATCC 33970</strain>
    </source>
</reference>
<reference key="2">
    <citation type="journal article" date="2001" name="Science">
        <title>Genome sequence of the plant pathogen and biotechnology agent Agrobacterium tumefaciens C58.</title>
        <authorList>
            <person name="Goodner B."/>
            <person name="Hinkle G."/>
            <person name="Gattung S."/>
            <person name="Miller N."/>
            <person name="Blanchard M."/>
            <person name="Qurollo B."/>
            <person name="Goldman B.S."/>
            <person name="Cao Y."/>
            <person name="Askenazi M."/>
            <person name="Halling C."/>
            <person name="Mullin L."/>
            <person name="Houmiel K."/>
            <person name="Gordon J."/>
            <person name="Vaudin M."/>
            <person name="Iartchouk O."/>
            <person name="Epp A."/>
            <person name="Liu F."/>
            <person name="Wollam C."/>
            <person name="Allinger M."/>
            <person name="Doughty D."/>
            <person name="Scott C."/>
            <person name="Lappas C."/>
            <person name="Markelz B."/>
            <person name="Flanagan C."/>
            <person name="Crowell C."/>
            <person name="Gurson J."/>
            <person name="Lomo C."/>
            <person name="Sear C."/>
            <person name="Strub G."/>
            <person name="Cielo C."/>
            <person name="Slater S."/>
        </authorList>
    </citation>
    <scope>NUCLEOTIDE SEQUENCE [LARGE SCALE GENOMIC DNA]</scope>
    <source>
        <strain>C58 / ATCC 33970</strain>
    </source>
</reference>
<feature type="signal peptide" description="Tat-type signal" evidence="1">
    <location>
        <begin position="1"/>
        <end position="31"/>
    </location>
</feature>
<feature type="chain" id="PRO_0000045976" description="Periplasmic nitrate reductase" evidence="1">
    <location>
        <begin position="32"/>
        <end position="834"/>
    </location>
</feature>
<feature type="domain" description="4Fe-4S Mo/W bis-MGD-type" evidence="1">
    <location>
        <begin position="43"/>
        <end position="99"/>
    </location>
</feature>
<feature type="binding site" evidence="1">
    <location>
        <position position="50"/>
    </location>
    <ligand>
        <name>[4Fe-4S] cluster</name>
        <dbReference type="ChEBI" id="CHEBI:49883"/>
    </ligand>
</feature>
<feature type="binding site" evidence="1">
    <location>
        <position position="53"/>
    </location>
    <ligand>
        <name>[4Fe-4S] cluster</name>
        <dbReference type="ChEBI" id="CHEBI:49883"/>
    </ligand>
</feature>
<feature type="binding site" evidence="1">
    <location>
        <position position="57"/>
    </location>
    <ligand>
        <name>[4Fe-4S] cluster</name>
        <dbReference type="ChEBI" id="CHEBI:49883"/>
    </ligand>
</feature>
<feature type="binding site" evidence="1">
    <location>
        <position position="85"/>
    </location>
    <ligand>
        <name>[4Fe-4S] cluster</name>
        <dbReference type="ChEBI" id="CHEBI:49883"/>
    </ligand>
</feature>
<feature type="binding site" evidence="1">
    <location>
        <position position="87"/>
    </location>
    <ligand>
        <name>Mo-bis(molybdopterin guanine dinucleotide)</name>
        <dbReference type="ChEBI" id="CHEBI:60539"/>
    </ligand>
</feature>
<feature type="binding site" evidence="1">
    <location>
        <position position="154"/>
    </location>
    <ligand>
        <name>Mo-bis(molybdopterin guanine dinucleotide)</name>
        <dbReference type="ChEBI" id="CHEBI:60539"/>
    </ligand>
</feature>
<feature type="binding site" evidence="1">
    <location>
        <position position="179"/>
    </location>
    <ligand>
        <name>Mo-bis(molybdopterin guanine dinucleotide)</name>
        <dbReference type="ChEBI" id="CHEBI:60539"/>
    </ligand>
</feature>
<feature type="binding site" evidence="1">
    <location>
        <position position="183"/>
    </location>
    <ligand>
        <name>Mo-bis(molybdopterin guanine dinucleotide)</name>
        <dbReference type="ChEBI" id="CHEBI:60539"/>
    </ligand>
</feature>
<feature type="binding site" evidence="1">
    <location>
        <begin position="216"/>
        <end position="223"/>
    </location>
    <ligand>
        <name>Mo-bis(molybdopterin guanine dinucleotide)</name>
        <dbReference type="ChEBI" id="CHEBI:60539"/>
    </ligand>
</feature>
<feature type="binding site" evidence="1">
    <location>
        <begin position="247"/>
        <end position="251"/>
    </location>
    <ligand>
        <name>Mo-bis(molybdopterin guanine dinucleotide)</name>
        <dbReference type="ChEBI" id="CHEBI:60539"/>
    </ligand>
</feature>
<feature type="binding site" evidence="1">
    <location>
        <begin position="266"/>
        <end position="268"/>
    </location>
    <ligand>
        <name>Mo-bis(molybdopterin guanine dinucleotide)</name>
        <dbReference type="ChEBI" id="CHEBI:60539"/>
    </ligand>
</feature>
<feature type="binding site" evidence="1">
    <location>
        <position position="377"/>
    </location>
    <ligand>
        <name>Mo-bis(molybdopterin guanine dinucleotide)</name>
        <dbReference type="ChEBI" id="CHEBI:60539"/>
    </ligand>
</feature>
<feature type="binding site" evidence="1">
    <location>
        <position position="381"/>
    </location>
    <ligand>
        <name>Mo-bis(molybdopterin guanine dinucleotide)</name>
        <dbReference type="ChEBI" id="CHEBI:60539"/>
    </ligand>
</feature>
<feature type="binding site" evidence="1">
    <location>
        <position position="487"/>
    </location>
    <ligand>
        <name>Mo-bis(molybdopterin guanine dinucleotide)</name>
        <dbReference type="ChEBI" id="CHEBI:60539"/>
    </ligand>
</feature>
<feature type="binding site" evidence="1">
    <location>
        <begin position="513"/>
        <end position="514"/>
    </location>
    <ligand>
        <name>Mo-bis(molybdopterin guanine dinucleotide)</name>
        <dbReference type="ChEBI" id="CHEBI:60539"/>
    </ligand>
</feature>
<feature type="binding site" evidence="1">
    <location>
        <position position="536"/>
    </location>
    <ligand>
        <name>Mo-bis(molybdopterin guanine dinucleotide)</name>
        <dbReference type="ChEBI" id="CHEBI:60539"/>
    </ligand>
</feature>
<feature type="binding site" evidence="1">
    <location>
        <position position="563"/>
    </location>
    <ligand>
        <name>Mo-bis(molybdopterin guanine dinucleotide)</name>
        <dbReference type="ChEBI" id="CHEBI:60539"/>
    </ligand>
</feature>
<feature type="binding site" evidence="1">
    <location>
        <begin position="723"/>
        <end position="732"/>
    </location>
    <ligand>
        <name>Mo-bis(molybdopterin guanine dinucleotide)</name>
        <dbReference type="ChEBI" id="CHEBI:60539"/>
    </ligand>
</feature>
<feature type="binding site" evidence="1">
    <location>
        <position position="799"/>
    </location>
    <ligand>
        <name>substrate</name>
    </ligand>
</feature>
<feature type="binding site" evidence="1">
    <location>
        <position position="807"/>
    </location>
    <ligand>
        <name>Mo-bis(molybdopterin guanine dinucleotide)</name>
        <dbReference type="ChEBI" id="CHEBI:60539"/>
    </ligand>
</feature>
<feature type="binding site" evidence="1">
    <location>
        <position position="824"/>
    </location>
    <ligand>
        <name>Mo-bis(molybdopterin guanine dinucleotide)</name>
        <dbReference type="ChEBI" id="CHEBI:60539"/>
    </ligand>
</feature>
<proteinExistence type="inferred from homology"/>
<comment type="function">
    <text evidence="1">Catalytic subunit of the periplasmic nitrate reductase complex NapAB. Receives electrons from NapB and catalyzes the reduction of nitrate to nitrite.</text>
</comment>
<comment type="catalytic activity">
    <reaction evidence="1">
        <text>2 Fe(II)-[cytochrome] + nitrate + 2 H(+) = 2 Fe(III)-[cytochrome] + nitrite + H2O</text>
        <dbReference type="Rhea" id="RHEA:12909"/>
        <dbReference type="Rhea" id="RHEA-COMP:11777"/>
        <dbReference type="Rhea" id="RHEA-COMP:11778"/>
        <dbReference type="ChEBI" id="CHEBI:15377"/>
        <dbReference type="ChEBI" id="CHEBI:15378"/>
        <dbReference type="ChEBI" id="CHEBI:16301"/>
        <dbReference type="ChEBI" id="CHEBI:17632"/>
        <dbReference type="ChEBI" id="CHEBI:29033"/>
        <dbReference type="ChEBI" id="CHEBI:29034"/>
        <dbReference type="EC" id="1.9.6.1"/>
    </reaction>
</comment>
<comment type="cofactor">
    <cofactor evidence="1">
        <name>[4Fe-4S] cluster</name>
        <dbReference type="ChEBI" id="CHEBI:49883"/>
    </cofactor>
    <text evidence="1">Binds 1 [4Fe-4S] cluster.</text>
</comment>
<comment type="cofactor">
    <cofactor evidence="1">
        <name>Mo-bis(molybdopterin guanine dinucleotide)</name>
        <dbReference type="ChEBI" id="CHEBI:60539"/>
    </cofactor>
    <text evidence="1">Binds 1 molybdenum-bis(molybdopterin guanine dinucleotide) (Mo-bis-MGD) cofactor per subunit.</text>
</comment>
<comment type="subunit">
    <text evidence="1">Component of the periplasmic nitrate reductase NapAB complex composed of NapA and NapB.</text>
</comment>
<comment type="subcellular location">
    <subcellularLocation>
        <location evidence="1">Periplasm</location>
    </subcellularLocation>
</comment>
<comment type="PTM">
    <text evidence="1">Predicted to be exported by the Tat system. The position of the signal peptide cleavage has not been experimentally proven.</text>
</comment>
<comment type="similarity">
    <text evidence="1">Belongs to the prokaryotic molybdopterin-containing oxidoreductase family. NasA/NapA/NarB subfamily.</text>
</comment>
<protein>
    <recommendedName>
        <fullName evidence="1">Periplasmic nitrate reductase</fullName>
        <ecNumber evidence="1">1.9.6.1</ecNumber>
    </recommendedName>
</protein>
<name>NAPA_AGRFC</name>
<sequence>MSSELTRRNLLKAHAAGIAAATAGIALPAAAQPVPGGVSALQIKWSKAPCRFCGTGCGVMVGVKEGKVVATHGDMQAEVNRGLNCIKGYFLSKIMYGKDRLETPLLRKKNGVYAKDGEFEPVSWDEAFDVMAQQCKRVLKEKGPTAVGMFGSGQWTIFEGYAATKLMRAGFRSNNLDPNARHCMASAAYAFMRTFGMDEPMGCYDDFEHADAFVLWGSNMAEMHPILWTRIADRRLGFDHVRVAVLSTFTHRSMDLADIPMVFKPGTDLVILNYIANHIIKTGRVNEDFVRNHTKFVRGVTDIGYGLRPDDPVEVNAANSADPTKTEAIDFETFKEFVSEYTLEKTAAMTGVEAGFLEELAELYADPKRKVMSLWTMGFNQHVRGVWANQMVYNIHLLTGKISEPGNSPFSLTGQPSACGTAREVGTFAHRLPADMTVTNPEHRKHAEEIWRIPHGIIPEKPGYHAVQQDRMLHDGKLNFYWVQVNNNVQAGPNTKNETYLGYRNPENFIVVSDAYPTITAMSADLILPAAMWVEKEGAYGNAERRTHVWHQLVEASGEARSDLWQLVEFSKRFTTDEVWPAEILDANPAYRGKTLYEVLYKDSDVGKFPLSEINADYKNQESSDFGFYLQKGLFEEYAAFGRGHGHDLAPYDAYHEVRGMRWPVVDGKETLWRYREGYDPYVKPGEGVKFYGNKDGRAVIIAVPYEPPAESPDQEFDTWLVTGRVLEHWHSGSMTMRVPELYKAFPGARCFMNADDARKRGLNQGAEIRIVSRRGEIRSRVETRGRNRMPPGVIFVPWFDASQLINKVTLDATDPISKQTDFKKCAVKIEPVA</sequence>
<evidence type="ECO:0000255" key="1">
    <source>
        <dbReference type="HAMAP-Rule" id="MF_01630"/>
    </source>
</evidence>
<organism>
    <name type="scientific">Agrobacterium fabrum (strain C58 / ATCC 33970)</name>
    <name type="common">Agrobacterium tumefaciens (strain C58)</name>
    <dbReference type="NCBI Taxonomy" id="176299"/>
    <lineage>
        <taxon>Bacteria</taxon>
        <taxon>Pseudomonadati</taxon>
        <taxon>Pseudomonadota</taxon>
        <taxon>Alphaproteobacteria</taxon>
        <taxon>Hyphomicrobiales</taxon>
        <taxon>Rhizobiaceae</taxon>
        <taxon>Rhizobium/Agrobacterium group</taxon>
        <taxon>Agrobacterium</taxon>
        <taxon>Agrobacterium tumefaciens complex</taxon>
    </lineage>
</organism>
<dbReference type="EC" id="1.9.6.1" evidence="1"/>
<dbReference type="EMBL" id="AE007870">
    <property type="protein sequence ID" value="AAK89031.1"/>
    <property type="molecule type" value="Genomic_DNA"/>
</dbReference>
<dbReference type="PIR" id="AD3098">
    <property type="entry name" value="AD3098"/>
</dbReference>
<dbReference type="PIR" id="E98188">
    <property type="entry name" value="E98188"/>
</dbReference>
<dbReference type="RefSeq" id="NP_356246.1">
    <property type="nucleotide sequence ID" value="NC_003063.2"/>
</dbReference>
<dbReference type="RefSeq" id="WP_010973822.1">
    <property type="nucleotide sequence ID" value="NC_003063.2"/>
</dbReference>
<dbReference type="SMR" id="Q8U7P1"/>
<dbReference type="STRING" id="176299.Atu4408"/>
<dbReference type="EnsemblBacteria" id="AAK89031">
    <property type="protein sequence ID" value="AAK89031"/>
    <property type="gene ID" value="Atu4408"/>
</dbReference>
<dbReference type="GeneID" id="1136282"/>
<dbReference type="KEGG" id="atu:Atu4408"/>
<dbReference type="PATRIC" id="fig|176299.10.peg.4216"/>
<dbReference type="eggNOG" id="COG0243">
    <property type="taxonomic scope" value="Bacteria"/>
</dbReference>
<dbReference type="HOGENOM" id="CLU_000422_13_4_5"/>
<dbReference type="OrthoDB" id="9816402at2"/>
<dbReference type="PhylomeDB" id="Q8U7P1"/>
<dbReference type="Proteomes" id="UP000000813">
    <property type="component" value="Chromosome linear"/>
</dbReference>
<dbReference type="GO" id="GO:0016020">
    <property type="term" value="C:membrane"/>
    <property type="evidence" value="ECO:0007669"/>
    <property type="project" value="TreeGrafter"/>
</dbReference>
<dbReference type="GO" id="GO:0009325">
    <property type="term" value="C:nitrate reductase complex"/>
    <property type="evidence" value="ECO:0007669"/>
    <property type="project" value="TreeGrafter"/>
</dbReference>
<dbReference type="GO" id="GO:0042597">
    <property type="term" value="C:periplasmic space"/>
    <property type="evidence" value="ECO:0007669"/>
    <property type="project" value="UniProtKB-SubCell"/>
</dbReference>
<dbReference type="GO" id="GO:0051539">
    <property type="term" value="F:4 iron, 4 sulfur cluster binding"/>
    <property type="evidence" value="ECO:0007669"/>
    <property type="project" value="UniProtKB-KW"/>
</dbReference>
<dbReference type="GO" id="GO:0009055">
    <property type="term" value="F:electron transfer activity"/>
    <property type="evidence" value="ECO:0007669"/>
    <property type="project" value="UniProtKB-UniRule"/>
</dbReference>
<dbReference type="GO" id="GO:0005506">
    <property type="term" value="F:iron ion binding"/>
    <property type="evidence" value="ECO:0007669"/>
    <property type="project" value="UniProtKB-UniRule"/>
</dbReference>
<dbReference type="GO" id="GO:0030151">
    <property type="term" value="F:molybdenum ion binding"/>
    <property type="evidence" value="ECO:0007669"/>
    <property type="project" value="InterPro"/>
</dbReference>
<dbReference type="GO" id="GO:0043546">
    <property type="term" value="F:molybdopterin cofactor binding"/>
    <property type="evidence" value="ECO:0007669"/>
    <property type="project" value="InterPro"/>
</dbReference>
<dbReference type="GO" id="GO:0050140">
    <property type="term" value="F:nitrate reductase (cytochrome) activity"/>
    <property type="evidence" value="ECO:0007669"/>
    <property type="project" value="UniProtKB-EC"/>
</dbReference>
<dbReference type="GO" id="GO:0045333">
    <property type="term" value="P:cellular respiration"/>
    <property type="evidence" value="ECO:0007669"/>
    <property type="project" value="UniProtKB-ARBA"/>
</dbReference>
<dbReference type="GO" id="GO:0006777">
    <property type="term" value="P:Mo-molybdopterin cofactor biosynthetic process"/>
    <property type="evidence" value="ECO:0007669"/>
    <property type="project" value="UniProtKB-UniRule"/>
</dbReference>
<dbReference type="GO" id="GO:0042128">
    <property type="term" value="P:nitrate assimilation"/>
    <property type="evidence" value="ECO:0007669"/>
    <property type="project" value="UniProtKB-UniRule"/>
</dbReference>
<dbReference type="CDD" id="cd02791">
    <property type="entry name" value="MopB_CT_Nitrate-R-NapA-like"/>
    <property type="match status" value="1"/>
</dbReference>
<dbReference type="CDD" id="cd02754">
    <property type="entry name" value="MopB_Nitrate-R-NapA-like"/>
    <property type="match status" value="1"/>
</dbReference>
<dbReference type="FunFam" id="2.40.40.20:FF:000005">
    <property type="entry name" value="Periplasmic nitrate reductase"/>
    <property type="match status" value="1"/>
</dbReference>
<dbReference type="Gene3D" id="2.40.40.20">
    <property type="match status" value="1"/>
</dbReference>
<dbReference type="Gene3D" id="3.30.200.210">
    <property type="match status" value="1"/>
</dbReference>
<dbReference type="Gene3D" id="3.40.50.740">
    <property type="match status" value="1"/>
</dbReference>
<dbReference type="Gene3D" id="3.40.228.10">
    <property type="entry name" value="Dimethylsulfoxide Reductase, domain 2"/>
    <property type="match status" value="1"/>
</dbReference>
<dbReference type="HAMAP" id="MF_01630">
    <property type="entry name" value="Nitrate_reduct_NapA"/>
    <property type="match status" value="1"/>
</dbReference>
<dbReference type="InterPro" id="IPR009010">
    <property type="entry name" value="Asp_de-COase-like_dom_sf"/>
</dbReference>
<dbReference type="InterPro" id="IPR041957">
    <property type="entry name" value="CT_Nitrate-R-NapA-like"/>
</dbReference>
<dbReference type="InterPro" id="IPR006657">
    <property type="entry name" value="MoPterin_dinucl-bd_dom"/>
</dbReference>
<dbReference type="InterPro" id="IPR006656">
    <property type="entry name" value="Mopterin_OxRdtase"/>
</dbReference>
<dbReference type="InterPro" id="IPR006963">
    <property type="entry name" value="Mopterin_OxRdtase_4Fe-4S_dom"/>
</dbReference>
<dbReference type="InterPro" id="IPR027467">
    <property type="entry name" value="MopterinOxRdtase_cofactor_BS"/>
</dbReference>
<dbReference type="InterPro" id="IPR010051">
    <property type="entry name" value="Periplasm_NO3_reductase_lsu"/>
</dbReference>
<dbReference type="InterPro" id="IPR050123">
    <property type="entry name" value="Prok_molybdopt-oxidoreductase"/>
</dbReference>
<dbReference type="InterPro" id="IPR006311">
    <property type="entry name" value="TAT_signal"/>
</dbReference>
<dbReference type="InterPro" id="IPR019546">
    <property type="entry name" value="TAT_signal_bac_arc"/>
</dbReference>
<dbReference type="NCBIfam" id="TIGR01706">
    <property type="entry name" value="NAPA"/>
    <property type="match status" value="1"/>
</dbReference>
<dbReference type="NCBIfam" id="NF010055">
    <property type="entry name" value="PRK13532.1"/>
    <property type="match status" value="1"/>
</dbReference>
<dbReference type="NCBIfam" id="TIGR01409">
    <property type="entry name" value="TAT_signal_seq"/>
    <property type="match status" value="1"/>
</dbReference>
<dbReference type="PANTHER" id="PTHR43105:SF11">
    <property type="entry name" value="PERIPLASMIC NITRATE REDUCTASE"/>
    <property type="match status" value="1"/>
</dbReference>
<dbReference type="PANTHER" id="PTHR43105">
    <property type="entry name" value="RESPIRATORY NITRATE REDUCTASE"/>
    <property type="match status" value="1"/>
</dbReference>
<dbReference type="Pfam" id="PF04879">
    <property type="entry name" value="Molybdop_Fe4S4"/>
    <property type="match status" value="1"/>
</dbReference>
<dbReference type="Pfam" id="PF00384">
    <property type="entry name" value="Molybdopterin"/>
    <property type="match status" value="1"/>
</dbReference>
<dbReference type="Pfam" id="PF01568">
    <property type="entry name" value="Molydop_binding"/>
    <property type="match status" value="1"/>
</dbReference>
<dbReference type="SMART" id="SM00926">
    <property type="entry name" value="Molybdop_Fe4S4"/>
    <property type="match status" value="1"/>
</dbReference>
<dbReference type="SUPFAM" id="SSF50692">
    <property type="entry name" value="ADC-like"/>
    <property type="match status" value="1"/>
</dbReference>
<dbReference type="SUPFAM" id="SSF53706">
    <property type="entry name" value="Formate dehydrogenase/DMSO reductase, domains 1-3"/>
    <property type="match status" value="1"/>
</dbReference>
<dbReference type="PROSITE" id="PS51669">
    <property type="entry name" value="4FE4S_MOW_BIS_MGD"/>
    <property type="match status" value="1"/>
</dbReference>
<dbReference type="PROSITE" id="PS00551">
    <property type="entry name" value="MOLYBDOPTERIN_PROK_1"/>
    <property type="match status" value="1"/>
</dbReference>
<dbReference type="PROSITE" id="PS51318">
    <property type="entry name" value="TAT"/>
    <property type="match status" value="1"/>
</dbReference>
<accession>Q8U7P1</accession>
<accession>Q7CUV7</accession>
<keyword id="KW-0004">4Fe-4S</keyword>
<keyword id="KW-0249">Electron transport</keyword>
<keyword id="KW-0408">Iron</keyword>
<keyword id="KW-0411">Iron-sulfur</keyword>
<keyword id="KW-0479">Metal-binding</keyword>
<keyword id="KW-0500">Molybdenum</keyword>
<keyword id="KW-0534">Nitrate assimilation</keyword>
<keyword id="KW-0560">Oxidoreductase</keyword>
<keyword id="KW-0574">Periplasm</keyword>
<keyword id="KW-1185">Reference proteome</keyword>
<keyword id="KW-0732">Signal</keyword>
<keyword id="KW-0813">Transport</keyword>